<evidence type="ECO:0000255" key="1"/>
<evidence type="ECO:0000255" key="2">
    <source>
        <dbReference type="PROSITE-ProRule" id="PRU00298"/>
    </source>
</evidence>
<evidence type="ECO:0000269" key="3">
    <source>
    </source>
</evidence>
<evidence type="ECO:0000269" key="4">
    <source>
    </source>
</evidence>
<evidence type="ECO:0000269" key="5">
    <source>
    </source>
</evidence>
<evidence type="ECO:0000269" key="6">
    <source>
    </source>
</evidence>
<evidence type="ECO:0000305" key="7"/>
<evidence type="ECO:0000305" key="8">
    <source>
    </source>
</evidence>
<sequence>MAKKVLLLSLYSAVLSTWFGFGYVQCKLPTSRSEIPNFDYTVAQQPDQSDACEQNEVCMVSVECILDAKKKAILKPCSTVPSVDGVCCPSSEYNGTSSRVQQNSEEHAADHLVLQAIHEGRREYDEKLRFEDEHRAVMTAKEKPEAMFHRMFLPGGLKTHGKEVVDAEEQANVYGHVFASRKYAELTNMTLKQRQGDRFARIPRAIRKRCLPPVPCNPHSRYRTIDGSCNNPLPDRTSWGMEGYPFDRVLEPAYEDGVWAPRIHSVTGNLLPSARVISVALFPDEYRPDPRLNILFMQMGQFISHDFTLSRGFTTKHGQAIECCTPNCTAPLFGPHRHFACFPIEVPPNDPFYSRFGVRCLNLVRIRLAQGPECQLGYAKQADLVTHFLDASTVYGSTNDVAAELRAFQQGRLKDSFPNGIELLPFARNRTACVPWARVCYEGGDIRTNQLLGLTMVHTLFMREHNRLAVGLSKINPHWDDERLYQEARRILIAEYQNVVYNEFLPILLGHERVQQLGLADPFDTYTNYYDPNLRPMTLAEVGAAAHRYGHSLVEGFFRFLTRESPPEDVFIKDIFNDPSKTLEPNSFDVMMFSFNQQPMEQMDRFLTYGLTRFLFKERKPFGSDLASLNIQRGRDFAVRPYNDYREWAGLGRITDFNQLGEVGALLAQVYESPDDVDLWPGGVLEPPAEGAVVGSTFVALLSAGYTRYKRADRYYFTNGPEVNPGAFTLQQLGEIRRTTLAGIICANADHKEDFYQAQEALRQSSADNVPVPCTRYDTVNLGLWREEGF</sequence>
<reference key="1">
    <citation type="journal article" date="2004" name="Insect Biochem. Mol. Biol.">
        <title>Molecular characterization of a novel peroxidase involved in Aedes aegypti chorion protein crosslinking.</title>
        <authorList>
            <person name="Li J.S."/>
            <person name="Kim S.R."/>
            <person name="Li J."/>
        </authorList>
    </citation>
    <scope>NUCLEOTIDE SEQUENCE [MRNA]</scope>
    <scope>PARTIAL PROTEIN SEQUENCE</scope>
    <source>
        <strain>Black-eyed Liverpool</strain>
        <tissue>Ovary</tissue>
    </source>
</reference>
<reference key="2">
    <citation type="journal article" date="2007" name="Science">
        <title>Genome sequence of Aedes aegypti, a major arbovirus vector.</title>
        <authorList>
            <person name="Nene V."/>
            <person name="Wortman J.R."/>
            <person name="Lawson D."/>
            <person name="Haas B.J."/>
            <person name="Kodira C.D."/>
            <person name="Tu Z.J."/>
            <person name="Loftus B.J."/>
            <person name="Xi Z."/>
            <person name="Megy K."/>
            <person name="Grabherr M."/>
            <person name="Ren Q."/>
            <person name="Zdobnov E.M."/>
            <person name="Lobo N.F."/>
            <person name="Campbell K.S."/>
            <person name="Brown S.E."/>
            <person name="Bonaldo M.F."/>
            <person name="Zhu J."/>
            <person name="Sinkins S.P."/>
            <person name="Hogenkamp D.G."/>
            <person name="Amedeo P."/>
            <person name="Arensburger P."/>
            <person name="Atkinson P.W."/>
            <person name="Bidwell S.L."/>
            <person name="Biedler J."/>
            <person name="Birney E."/>
            <person name="Bruggner R.V."/>
            <person name="Costas J."/>
            <person name="Coy M.R."/>
            <person name="Crabtree J."/>
            <person name="Crawford M."/>
            <person name="DeBruyn B."/>
            <person name="DeCaprio D."/>
            <person name="Eiglmeier K."/>
            <person name="Eisenstadt E."/>
            <person name="El-Dorry H."/>
            <person name="Gelbart W.M."/>
            <person name="Gomes S.L."/>
            <person name="Hammond M."/>
            <person name="Hannick L.I."/>
            <person name="Hogan J.R."/>
            <person name="Holmes M.H."/>
            <person name="Jaffe D."/>
            <person name="Johnston S.J."/>
            <person name="Kennedy R.C."/>
            <person name="Koo H."/>
            <person name="Kravitz S."/>
            <person name="Kriventseva E.V."/>
            <person name="Kulp D."/>
            <person name="Labutti K."/>
            <person name="Lee E."/>
            <person name="Li S."/>
            <person name="Lovin D.D."/>
            <person name="Mao C."/>
            <person name="Mauceli E."/>
            <person name="Menck C.F."/>
            <person name="Miller J.R."/>
            <person name="Montgomery P."/>
            <person name="Mori A."/>
            <person name="Nascimento A.L."/>
            <person name="Naveira H.F."/>
            <person name="Nusbaum C."/>
            <person name="O'Leary S.B."/>
            <person name="Orvis J."/>
            <person name="Pertea M."/>
            <person name="Quesneville H."/>
            <person name="Reidenbach K.R."/>
            <person name="Rogers Y.-H.C."/>
            <person name="Roth C.W."/>
            <person name="Schneider J.R."/>
            <person name="Schatz M."/>
            <person name="Shumway M."/>
            <person name="Stanke M."/>
            <person name="Stinson E.O."/>
            <person name="Tubio J.M.C."/>
            <person name="Vanzee J.P."/>
            <person name="Verjovski-Almeida S."/>
            <person name="Werner D."/>
            <person name="White O.R."/>
            <person name="Wyder S."/>
            <person name="Zeng Q."/>
            <person name="Zhao Q."/>
            <person name="Zhao Y."/>
            <person name="Hill C.A."/>
            <person name="Raikhel A.S."/>
            <person name="Soares M.B."/>
            <person name="Knudson D.L."/>
            <person name="Lee N.H."/>
            <person name="Galagan J."/>
            <person name="Salzberg S.L."/>
            <person name="Paulsen I.T."/>
            <person name="Dimopoulos G."/>
            <person name="Collins F.H."/>
            <person name="Bruce B."/>
            <person name="Fraser-Liggett C.M."/>
            <person name="Severson D.W."/>
        </authorList>
    </citation>
    <scope>NUCLEOTIDE SEQUENCE [LARGE SCALE GENOMIC DNA]</scope>
    <source>
        <strain>LVPib12</strain>
    </source>
</reference>
<reference key="3">
    <citation type="journal article" date="2000" name="Arch. Biochem. Biophys.">
        <title>Purification and characterization of chorion peroxidase from Aedes aegypti eggs.</title>
        <authorList>
            <person name="Han Q."/>
            <person name="Li G."/>
            <person name="Li J."/>
        </authorList>
    </citation>
    <scope>PROTEIN SEQUENCE OF 210-228</scope>
    <scope>FUNCTION</scope>
    <scope>COFACTOR</scope>
    <source>
        <strain>Black-eyed Liverpool</strain>
        <tissue>Ovary</tissue>
    </source>
</reference>
<reference key="4">
    <citation type="journal article" date="2005" name="J. Biol. Chem.">
        <title>Novel glycosidic linkage in Aedes aegypti chorion peroxidase: N-mannosyl tryptophan.</title>
        <authorList>
            <person name="Li J.S."/>
            <person name="Cui L."/>
            <person name="Rock D.L."/>
            <person name="Li J."/>
        </authorList>
    </citation>
    <scope>PROTEIN SEQUENCE OF 210-221; 224-262; 276-355; 368-406; 413-467; 475-490; 514-559; 564-581; 606-613; 620-633; 636-646; 654-708; 712-737 AND 739-786</scope>
    <scope>ACETYLATION AT CYS-210</scope>
    <scope>GLYCOSYLATION AT TRP-259; ASN-327; TRP-479 AND TRP-785</scope>
    <scope>HYDROXYLATION AT TYR-353</scope>
    <scope>FUNCTION</scope>
    <source>
        <strain>Black-eyed Liverpool</strain>
        <tissue>Ovary</tissue>
    </source>
</reference>
<reference key="5">
    <citation type="journal article" date="2005" name="Protein Sci.">
        <title>Characterization of N-linked oligosaccharides in chorion peroxidase of Aedes aegypti mosquito.</title>
        <authorList>
            <person name="Li J.S."/>
            <person name="Li J."/>
        </authorList>
    </citation>
    <scope>PROTEIN SEQUENCE OF 317-337</scope>
    <scope>GLYCOSYLATION AT ASN-327</scope>
</reference>
<reference key="6">
    <citation type="journal article" date="1996" name="Insect Biochem. Mol. Biol.">
        <title>Involvement of peroxidase in chorion hardening in Aedes aegypti.</title>
        <authorList>
            <person name="Li J."/>
            <person name="Hodgeman B.A."/>
            <person name="Christensen B.M."/>
        </authorList>
    </citation>
    <scope>FUNCTION</scope>
    <scope>INDUCTION</scope>
    <source>
        <strain>Black-eyed Liverpool</strain>
        <tissue>Ovary</tissue>
    </source>
</reference>
<proteinExistence type="evidence at protein level"/>
<name>PERC_AEDAE</name>
<feature type="signal peptide" evidence="1">
    <location>
        <begin position="1"/>
        <end position="16"/>
    </location>
</feature>
<feature type="propeptide" id="PRO_0000232892" evidence="3 5">
    <location>
        <begin position="17"/>
        <end position="209"/>
    </location>
</feature>
<feature type="chain" id="PRO_0000407854" description="Chorion peroxidase">
    <location>
        <begin position="210"/>
        <end position="790"/>
    </location>
</feature>
<feature type="active site" description="Proton acceptor" evidence="2">
    <location>
        <position position="305"/>
    </location>
</feature>
<feature type="binding site" description="axial binding residue" evidence="2">
    <location>
        <position position="551"/>
    </location>
    <ligand>
        <name>heme b</name>
        <dbReference type="ChEBI" id="CHEBI:60344"/>
    </ligand>
    <ligandPart>
        <name>Fe</name>
        <dbReference type="ChEBI" id="CHEBI:18248"/>
    </ligandPart>
</feature>
<feature type="site" description="Transition state stabilizer" evidence="2">
    <location>
        <position position="447"/>
    </location>
</feature>
<feature type="modified residue" description="N-acetylcysteine; in Chorion peroxidase light chain" evidence="8">
    <location>
        <position position="210"/>
    </location>
</feature>
<feature type="modified residue" description="3',4'-dihydroxyphenylalanine" evidence="5">
    <location>
        <position position="353"/>
    </location>
</feature>
<feature type="glycosylation site" description="N-linked (Man) tryptophan" evidence="5">
    <location>
        <position position="259"/>
    </location>
</feature>
<feature type="glycosylation site" description="N-linked (GlcNAc...) asparagine" evidence="4 5">
    <location>
        <position position="327"/>
    </location>
</feature>
<feature type="glycosylation site" description="N-linked (Man) tryptophan" evidence="5">
    <location>
        <position position="479"/>
    </location>
</feature>
<feature type="glycosylation site" description="N-linked (Man) tryptophan" evidence="7">
    <location>
        <position position="680"/>
    </location>
</feature>
<feature type="glycosylation site" description="N-linked (Man) tryptophan" evidence="5">
    <location>
        <position position="785"/>
    </location>
</feature>
<feature type="disulfide bond" evidence="2">
    <location>
        <begin position="216"/>
        <end position="229"/>
    </location>
</feature>
<feature type="disulfide bond" evidence="2">
    <location>
        <begin position="433"/>
        <end position="440"/>
    </location>
</feature>
<feature type="disulfide bond" evidence="2">
    <location>
        <begin position="746"/>
        <end position="774"/>
    </location>
</feature>
<feature type="sequence conflict" description="In Ref. 1; AAT27427." evidence="7" ref="1">
    <original>F</original>
    <variation>I</variation>
    <location>
        <position position="19"/>
    </location>
</feature>
<feature type="sequence conflict" description="In Ref. 1; AAT27427." evidence="7" ref="1">
    <original>VSV</original>
    <variation>API</variation>
    <location>
        <begin position="60"/>
        <end position="62"/>
    </location>
</feature>
<feature type="sequence conflict" description="In Ref. 1; AAT27427." evidence="7" ref="1">
    <original>V</original>
    <variation>I</variation>
    <location>
        <position position="86"/>
    </location>
</feature>
<feature type="sequence conflict" description="In Ref. 1; AAT27427." evidence="7" ref="1">
    <original>Y</original>
    <variation>H</variation>
    <location>
        <position position="93"/>
    </location>
</feature>
<feature type="sequence conflict" description="In Ref. 1; AAT27427." evidence="7" ref="1">
    <original>N</original>
    <variation>S</variation>
    <location>
        <position position="103"/>
    </location>
</feature>
<feature type="sequence conflict" description="In Ref. 1; AAT27427." evidence="7" ref="1">
    <original>F</original>
    <variation>L</variation>
    <location>
        <position position="130"/>
    </location>
</feature>
<feature type="sequence conflict" description="In Ref. 1; AAT27427." evidence="7" ref="1">
    <original>K</original>
    <variation>R</variation>
    <location>
        <position position="158"/>
    </location>
</feature>
<feature type="sequence conflict" description="In Ref. 1; AAT27427." evidence="7" ref="1">
    <original>Q</original>
    <variation>E</variation>
    <location>
        <position position="193"/>
    </location>
</feature>
<feature type="sequence conflict" description="In Ref. 3; AA sequence." evidence="7" ref="3">
    <original>PVPCNPH</original>
    <variation>NVPPNNL</variation>
    <location>
        <begin position="213"/>
        <end position="219"/>
    </location>
</feature>
<feature type="sequence conflict" description="In Ref. 1; AAT27427." evidence="7" ref="1">
    <original>N</original>
    <variation>S</variation>
    <location>
        <position position="217"/>
    </location>
</feature>
<feature type="sequence conflict" description="In Ref. 3; AA sequence." evidence="7" ref="3">
    <original>GS</original>
    <variation>DE</variation>
    <location>
        <begin position="227"/>
        <end position="228"/>
    </location>
</feature>
<feature type="sequence conflict" description="In Ref. 1; AAT27427." evidence="7" ref="1">
    <original>H</original>
    <variation>Y</variation>
    <location>
        <position position="458"/>
    </location>
</feature>
<feature type="sequence conflict" description="In Ref. 1; AAT27427." evidence="7" ref="1">
    <original>E</original>
    <variation>A</variation>
    <location>
        <position position="495"/>
    </location>
</feature>
<feature type="sequence conflict" description="In Ref. 1; AAT27427." evidence="7" ref="1">
    <original>N</original>
    <variation>T</variation>
    <location>
        <position position="586"/>
    </location>
</feature>
<feature type="sequence conflict" description="In Ref. 1; AAT27427." evidence="7" ref="1">
    <original>S</original>
    <variation>P</variation>
    <location>
        <position position="696"/>
    </location>
</feature>
<feature type="sequence conflict" description="In Ref. 1; AAT27427." evidence="7" ref="1">
    <original>F</original>
    <variation>L</variation>
    <location>
        <position position="728"/>
    </location>
</feature>
<keyword id="KW-0007">Acetylation</keyword>
<keyword id="KW-0165">Cleavage on pair of basic residues</keyword>
<keyword id="KW-0903">Direct protein sequencing</keyword>
<keyword id="KW-1015">Disulfide bond</keyword>
<keyword id="KW-0325">Glycoprotein</keyword>
<keyword id="KW-0349">Heme</keyword>
<keyword id="KW-0376">Hydrogen peroxide</keyword>
<keyword id="KW-0379">Hydroxylation</keyword>
<keyword id="KW-0408">Iron</keyword>
<keyword id="KW-0479">Metal-binding</keyword>
<keyword id="KW-0560">Oxidoreductase</keyword>
<keyword id="KW-0575">Peroxidase</keyword>
<keyword id="KW-1185">Reference proteome</keyword>
<keyword id="KW-0964">Secreted</keyword>
<keyword id="KW-0732">Signal</keyword>
<accession>P82600</accession>
<accession>Q17CY6</accession>
<accession>Q5DQ92</accession>
<protein>
    <recommendedName>
        <fullName>Chorion peroxidase</fullName>
        <ecNumber>1.11.1.7</ecNumber>
    </recommendedName>
</protein>
<organism>
    <name type="scientific">Aedes aegypti</name>
    <name type="common">Yellowfever mosquito</name>
    <name type="synonym">Culex aegypti</name>
    <dbReference type="NCBI Taxonomy" id="7159"/>
    <lineage>
        <taxon>Eukaryota</taxon>
        <taxon>Metazoa</taxon>
        <taxon>Ecdysozoa</taxon>
        <taxon>Arthropoda</taxon>
        <taxon>Hexapoda</taxon>
        <taxon>Insecta</taxon>
        <taxon>Pterygota</taxon>
        <taxon>Neoptera</taxon>
        <taxon>Endopterygota</taxon>
        <taxon>Diptera</taxon>
        <taxon>Nematocera</taxon>
        <taxon>Culicoidea</taxon>
        <taxon>Culicidae</taxon>
        <taxon>Culicinae</taxon>
        <taxon>Aedini</taxon>
        <taxon>Aedes</taxon>
        <taxon>Stegomyia</taxon>
    </lineage>
</organism>
<dbReference type="EC" id="1.11.1.7"/>
<dbReference type="EMBL" id="AY547316">
    <property type="protein sequence ID" value="AAT27427.1"/>
    <property type="status" value="ALT_INIT"/>
    <property type="molecule type" value="mRNA"/>
</dbReference>
<dbReference type="EMBL" id="CH477302">
    <property type="protein sequence ID" value="EAT44219.1"/>
    <property type="molecule type" value="Genomic_DNA"/>
</dbReference>
<dbReference type="RefSeq" id="XP_001649030.1">
    <property type="nucleotide sequence ID" value="XM_001648980.2"/>
</dbReference>
<dbReference type="SMR" id="P82600"/>
<dbReference type="FunCoup" id="P82600">
    <property type="interactions" value="31"/>
</dbReference>
<dbReference type="STRING" id="7159.P82600"/>
<dbReference type="PeroxiBase" id="3555">
    <property type="entry name" value="AaePxt02"/>
</dbReference>
<dbReference type="GlyCosmos" id="P82600">
    <property type="glycosylation" value="5 sites, No reported glycans"/>
</dbReference>
<dbReference type="iPTMnet" id="P82600"/>
<dbReference type="PaxDb" id="7159-AAEL004386-PA"/>
<dbReference type="GeneID" id="5564684"/>
<dbReference type="KEGG" id="aag:5564684"/>
<dbReference type="VEuPathDB" id="VectorBase:AAEL004386"/>
<dbReference type="eggNOG" id="KOG2408">
    <property type="taxonomic scope" value="Eukaryota"/>
</dbReference>
<dbReference type="HOGENOM" id="CLU_006087_5_0_1"/>
<dbReference type="InParanoid" id="P82600"/>
<dbReference type="OMA" id="ICANADH"/>
<dbReference type="OrthoDB" id="823504at2759"/>
<dbReference type="PhylomeDB" id="P82600"/>
<dbReference type="Proteomes" id="UP000008820">
    <property type="component" value="Unassembled WGS sequence"/>
</dbReference>
<dbReference type="Proteomes" id="UP000682892">
    <property type="component" value="Chromosome 1"/>
</dbReference>
<dbReference type="GO" id="GO:0005576">
    <property type="term" value="C:extracellular region"/>
    <property type="evidence" value="ECO:0000305"/>
    <property type="project" value="UniProtKB"/>
</dbReference>
<dbReference type="GO" id="GO:0020037">
    <property type="term" value="F:heme binding"/>
    <property type="evidence" value="ECO:0007669"/>
    <property type="project" value="InterPro"/>
</dbReference>
<dbReference type="GO" id="GO:0140825">
    <property type="term" value="F:lactoperoxidase activity"/>
    <property type="evidence" value="ECO:0007669"/>
    <property type="project" value="UniProtKB-EC"/>
</dbReference>
<dbReference type="GO" id="GO:0046872">
    <property type="term" value="F:metal ion binding"/>
    <property type="evidence" value="ECO:0007669"/>
    <property type="project" value="UniProtKB-KW"/>
</dbReference>
<dbReference type="GO" id="GO:0004601">
    <property type="term" value="F:peroxidase activity"/>
    <property type="evidence" value="ECO:0000314"/>
    <property type="project" value="UniProtKB"/>
</dbReference>
<dbReference type="GO" id="GO:0007306">
    <property type="term" value="P:egg chorion assembly"/>
    <property type="evidence" value="ECO:0000314"/>
    <property type="project" value="UniProtKB"/>
</dbReference>
<dbReference type="GO" id="GO:0042744">
    <property type="term" value="P:hydrogen peroxide catabolic process"/>
    <property type="evidence" value="ECO:0007669"/>
    <property type="project" value="UniProtKB-KW"/>
</dbReference>
<dbReference type="GO" id="GO:0042743">
    <property type="term" value="P:hydrogen peroxide metabolic process"/>
    <property type="evidence" value="ECO:0000314"/>
    <property type="project" value="UniProtKB"/>
</dbReference>
<dbReference type="GO" id="GO:0006979">
    <property type="term" value="P:response to oxidative stress"/>
    <property type="evidence" value="ECO:0007669"/>
    <property type="project" value="InterPro"/>
</dbReference>
<dbReference type="CDD" id="cd09823">
    <property type="entry name" value="peroxinectin_like"/>
    <property type="match status" value="1"/>
</dbReference>
<dbReference type="FunFam" id="1.10.640.10:FF:000003">
    <property type="entry name" value="chorion peroxidase"/>
    <property type="match status" value="1"/>
</dbReference>
<dbReference type="Gene3D" id="1.10.640.10">
    <property type="entry name" value="Haem peroxidase domain superfamily, animal type"/>
    <property type="match status" value="1"/>
</dbReference>
<dbReference type="InterPro" id="IPR019791">
    <property type="entry name" value="Haem_peroxidase_animal"/>
</dbReference>
<dbReference type="InterPro" id="IPR010255">
    <property type="entry name" value="Haem_peroxidase_sf"/>
</dbReference>
<dbReference type="InterPro" id="IPR037120">
    <property type="entry name" value="Haem_peroxidase_sf_animal"/>
</dbReference>
<dbReference type="PANTHER" id="PTHR11475:SF4">
    <property type="entry name" value="CHORION PEROXIDASE"/>
    <property type="match status" value="1"/>
</dbReference>
<dbReference type="PANTHER" id="PTHR11475">
    <property type="entry name" value="OXIDASE/PEROXIDASE"/>
    <property type="match status" value="1"/>
</dbReference>
<dbReference type="Pfam" id="PF03098">
    <property type="entry name" value="An_peroxidase"/>
    <property type="match status" value="1"/>
</dbReference>
<dbReference type="PRINTS" id="PR00457">
    <property type="entry name" value="ANPEROXIDASE"/>
</dbReference>
<dbReference type="SUPFAM" id="SSF48113">
    <property type="entry name" value="Heme-dependent peroxidases"/>
    <property type="match status" value="1"/>
</dbReference>
<dbReference type="PROSITE" id="PS50292">
    <property type="entry name" value="PEROXIDASE_3"/>
    <property type="match status" value="1"/>
</dbReference>
<comment type="function">
    <text evidence="3 5 6">Involved in the formation of a rigid and insoluble egg chorion by catalyzing chorion protein cross-linking through dityrosine formation and phenol oxidase-catalyzed chorion melanization.</text>
</comment>
<comment type="catalytic activity">
    <reaction>
        <text>2 a phenolic donor + H2O2 = 2 a phenolic radical donor + 2 H2O</text>
        <dbReference type="Rhea" id="RHEA:56136"/>
        <dbReference type="ChEBI" id="CHEBI:15377"/>
        <dbReference type="ChEBI" id="CHEBI:16240"/>
        <dbReference type="ChEBI" id="CHEBI:139520"/>
        <dbReference type="ChEBI" id="CHEBI:139521"/>
        <dbReference type="EC" id="1.11.1.7"/>
    </reaction>
</comment>
<comment type="cofactor">
    <cofactor evidence="3">
        <name>heme b</name>
        <dbReference type="ChEBI" id="CHEBI:60344"/>
    </cofactor>
    <text evidence="3">Binds 1 heme b (iron(II)-protoporphyrin IX) group per heterodimer.</text>
</comment>
<comment type="activity regulation">
    <text>Extremely resistant to denaturating agents, such as SDS and organic solvents.</text>
</comment>
<comment type="biophysicochemical properties">
    <phDependence>
        <text>Optimum pH is 8.0 with guaiacol as the reducing agent.</text>
    </phDependence>
</comment>
<comment type="subunit">
    <text evidence="7">Heterodimer.</text>
</comment>
<comment type="subcellular location">
    <subcellularLocation>
        <location>Secreted</location>
    </subcellularLocation>
    <text>In the chorion layer of the mature eggs.</text>
</comment>
<comment type="induction">
    <text evidence="6">Expression levels increase 24 hours following blood feeding. Peak peroxidase activity is reached at 36-48 hours after a blood meal.</text>
</comment>
<comment type="PTM">
    <text>N-glycosylated on Trp by mannose and on Asn by N-acetylglucosamine.</text>
</comment>
<comment type="PTM">
    <text>There is a hexose glycosylation of an unidentified residue between 654 and 708; Trp-680 is conserved in closely related species and is probably mannosylated.</text>
</comment>
<comment type="similarity">
    <text evidence="2">Belongs to the peroxidase family. XPO subfamily.</text>
</comment>
<comment type="sequence caution" evidence="7">
    <conflict type="erroneous initiation">
        <sequence resource="EMBL-CDS" id="AAT27427"/>
    </conflict>
    <text>Extended N-terminus.</text>
</comment>
<gene>
    <name type="primary">pxt</name>
    <name type="ORF">AAEL004386</name>
</gene>